<name>CPXA_ECO57</name>
<evidence type="ECO:0000250" key="1"/>
<evidence type="ECO:0000255" key="2">
    <source>
        <dbReference type="PROSITE-ProRule" id="PRU00102"/>
    </source>
</evidence>
<evidence type="ECO:0000255" key="3">
    <source>
        <dbReference type="PROSITE-ProRule" id="PRU00107"/>
    </source>
</evidence>
<evidence type="ECO:0000305" key="4"/>
<sequence>MIGSLTARIFAIFWLTLALVLMLVLMLPKLDSRQMTELLDSEQRQGLMIEQHVEAELANDPPNDLMWWRRLFRAIDKWAPPGQRLLLVTTEGRVIGAERSEMQIIRNFIGQADNADHPQKKKYGRVELVGPFSVRDGEDNYQLYLIRPASSSQSDFINLLFDRPLLLLIVTMLVSTPLLLWLAWSLAKPARKLKNAADEVAQGNLRQHPELEAGPQEFLAAGASFNQMVTALERMMTSQQRLLSDISHELRTPLTRLQLGTALLRRRSGESKELERIETEAQRLDSMINDLLVMSRNQQKNALVSETIKANQLWSEVLDNAAFEAEQMGKSLTVNFPPGPWPLYGNPNALESALENIVRNALRYSHTKIEVGFAVDKDGITITVDDDGPGVSPEDREQIFRPFYRTDEARDRESGGTGLGLAIVETAIQQHRGWVKAEDSPLGGLRLVIWLPLYKRS</sequence>
<keyword id="KW-0067">ATP-binding</keyword>
<keyword id="KW-0997">Cell inner membrane</keyword>
<keyword id="KW-1003">Cell membrane</keyword>
<keyword id="KW-0418">Kinase</keyword>
<keyword id="KW-0472">Membrane</keyword>
<keyword id="KW-0547">Nucleotide-binding</keyword>
<keyword id="KW-0597">Phosphoprotein</keyword>
<keyword id="KW-1185">Reference proteome</keyword>
<keyword id="KW-0808">Transferase</keyword>
<keyword id="KW-0812">Transmembrane</keyword>
<keyword id="KW-1133">Transmembrane helix</keyword>
<keyword id="KW-0902">Two-component regulatory system</keyword>
<organism>
    <name type="scientific">Escherichia coli O157:H7</name>
    <dbReference type="NCBI Taxonomy" id="83334"/>
    <lineage>
        <taxon>Bacteria</taxon>
        <taxon>Pseudomonadati</taxon>
        <taxon>Pseudomonadota</taxon>
        <taxon>Gammaproteobacteria</taxon>
        <taxon>Enterobacterales</taxon>
        <taxon>Enterobacteriaceae</taxon>
        <taxon>Escherichia</taxon>
    </lineage>
</organism>
<accession>P0AE84</accession>
<accession>P08336</accession>
<comment type="function">
    <text evidence="1">This protein is involved in several diverse cellular processes, such as the functioning of acetohydroxyacid synthetase I, in the biosynthesis of isoleucine and valine, the TraJ protein activation activity for tra gene expression in F plasmid, and the synthesis, translocation, or stability of cell envelope proteins. Activates CpxR by phosphorylation (By similarity).</text>
</comment>
<comment type="catalytic activity">
    <reaction>
        <text>ATP + protein L-histidine = ADP + protein N-phospho-L-histidine.</text>
        <dbReference type="EC" id="2.7.13.3"/>
    </reaction>
</comment>
<comment type="subcellular location">
    <subcellularLocation>
        <location evidence="1">Cell inner membrane</location>
        <topology evidence="1">Multi-pass membrane protein</topology>
    </subcellularLocation>
</comment>
<proteinExistence type="inferred from homology"/>
<protein>
    <recommendedName>
        <fullName>Sensor protein CpxA</fullName>
        <ecNumber>2.7.13.3</ecNumber>
    </recommendedName>
</protein>
<reference key="1">
    <citation type="journal article" date="2001" name="Nature">
        <title>Genome sequence of enterohaemorrhagic Escherichia coli O157:H7.</title>
        <authorList>
            <person name="Perna N.T."/>
            <person name="Plunkett G. III"/>
            <person name="Burland V."/>
            <person name="Mau B."/>
            <person name="Glasner J.D."/>
            <person name="Rose D.J."/>
            <person name="Mayhew G.F."/>
            <person name="Evans P.S."/>
            <person name="Gregor J."/>
            <person name="Kirkpatrick H.A."/>
            <person name="Posfai G."/>
            <person name="Hackett J."/>
            <person name="Klink S."/>
            <person name="Boutin A."/>
            <person name="Shao Y."/>
            <person name="Miller L."/>
            <person name="Grotbeck E.J."/>
            <person name="Davis N.W."/>
            <person name="Lim A."/>
            <person name="Dimalanta E.T."/>
            <person name="Potamousis K."/>
            <person name="Apodaca J."/>
            <person name="Anantharaman T.S."/>
            <person name="Lin J."/>
            <person name="Yen G."/>
            <person name="Schwartz D.C."/>
            <person name="Welch R.A."/>
            <person name="Blattner F.R."/>
        </authorList>
    </citation>
    <scope>NUCLEOTIDE SEQUENCE [LARGE SCALE GENOMIC DNA]</scope>
    <source>
        <strain>O157:H7 / EDL933 / ATCC 700927 / EHEC</strain>
    </source>
</reference>
<reference key="2">
    <citation type="journal article" date="2001" name="DNA Res.">
        <title>Complete genome sequence of enterohemorrhagic Escherichia coli O157:H7 and genomic comparison with a laboratory strain K-12.</title>
        <authorList>
            <person name="Hayashi T."/>
            <person name="Makino K."/>
            <person name="Ohnishi M."/>
            <person name="Kurokawa K."/>
            <person name="Ishii K."/>
            <person name="Yokoyama K."/>
            <person name="Han C.-G."/>
            <person name="Ohtsubo E."/>
            <person name="Nakayama K."/>
            <person name="Murata T."/>
            <person name="Tanaka M."/>
            <person name="Tobe T."/>
            <person name="Iida T."/>
            <person name="Takami H."/>
            <person name="Honda T."/>
            <person name="Sasakawa C."/>
            <person name="Ogasawara N."/>
            <person name="Yasunaga T."/>
            <person name="Kuhara S."/>
            <person name="Shiba T."/>
            <person name="Hattori M."/>
            <person name="Shinagawa H."/>
        </authorList>
    </citation>
    <scope>NUCLEOTIDE SEQUENCE [LARGE SCALE GENOMIC DNA]</scope>
    <source>
        <strain>O157:H7 / Sakai / RIMD 0509952 / EHEC</strain>
    </source>
</reference>
<dbReference type="EC" id="2.7.13.3"/>
<dbReference type="EMBL" id="AE005174">
    <property type="protein sequence ID" value="AAG59105.1"/>
    <property type="molecule type" value="Genomic_DNA"/>
</dbReference>
<dbReference type="EMBL" id="BA000007">
    <property type="protein sequence ID" value="BAB38260.1"/>
    <property type="molecule type" value="Genomic_DNA"/>
</dbReference>
<dbReference type="PIR" id="E91233">
    <property type="entry name" value="E91233"/>
</dbReference>
<dbReference type="RefSeq" id="NP_312864.1">
    <property type="nucleotide sequence ID" value="NC_002695.1"/>
</dbReference>
<dbReference type="RefSeq" id="WP_000580417.1">
    <property type="nucleotide sequence ID" value="NZ_VOAI01000016.1"/>
</dbReference>
<dbReference type="SMR" id="P0AE84"/>
<dbReference type="STRING" id="155864.Z5456"/>
<dbReference type="GeneID" id="914983"/>
<dbReference type="GeneID" id="93778027"/>
<dbReference type="KEGG" id="ece:Z5456"/>
<dbReference type="KEGG" id="ecs:ECs_4837"/>
<dbReference type="PATRIC" id="fig|386585.9.peg.5058"/>
<dbReference type="eggNOG" id="COG2205">
    <property type="taxonomic scope" value="Bacteria"/>
</dbReference>
<dbReference type="HOGENOM" id="CLU_000445_89_27_6"/>
<dbReference type="OMA" id="ANDLLWW"/>
<dbReference type="Proteomes" id="UP000000558">
    <property type="component" value="Chromosome"/>
</dbReference>
<dbReference type="Proteomes" id="UP000002519">
    <property type="component" value="Chromosome"/>
</dbReference>
<dbReference type="GO" id="GO:0005886">
    <property type="term" value="C:plasma membrane"/>
    <property type="evidence" value="ECO:0007669"/>
    <property type="project" value="UniProtKB-SubCell"/>
</dbReference>
<dbReference type="GO" id="GO:0005524">
    <property type="term" value="F:ATP binding"/>
    <property type="evidence" value="ECO:0007669"/>
    <property type="project" value="UniProtKB-KW"/>
</dbReference>
<dbReference type="GO" id="GO:0000155">
    <property type="term" value="F:phosphorelay sensor kinase activity"/>
    <property type="evidence" value="ECO:0007669"/>
    <property type="project" value="InterPro"/>
</dbReference>
<dbReference type="CDD" id="cd06225">
    <property type="entry name" value="HAMP"/>
    <property type="match status" value="1"/>
</dbReference>
<dbReference type="CDD" id="cd16949">
    <property type="entry name" value="HATPase_CpxA-like"/>
    <property type="match status" value="1"/>
</dbReference>
<dbReference type="CDD" id="cd00082">
    <property type="entry name" value="HisKA"/>
    <property type="match status" value="1"/>
</dbReference>
<dbReference type="FunFam" id="1.10.287.130:FF:000007">
    <property type="entry name" value="Sensor histidine kinase CpxA"/>
    <property type="match status" value="1"/>
</dbReference>
<dbReference type="FunFam" id="3.30.450.210:FF:000001">
    <property type="entry name" value="Sensor histidine kinase CpxA"/>
    <property type="match status" value="1"/>
</dbReference>
<dbReference type="FunFam" id="3.30.565.10:FF:000011">
    <property type="entry name" value="Sensor histidine kinase CpxA"/>
    <property type="match status" value="1"/>
</dbReference>
<dbReference type="Gene3D" id="1.10.287.130">
    <property type="match status" value="1"/>
</dbReference>
<dbReference type="Gene3D" id="3.30.565.10">
    <property type="entry name" value="Histidine kinase-like ATPase, C-terminal domain"/>
    <property type="match status" value="1"/>
</dbReference>
<dbReference type="Gene3D" id="3.30.450.210">
    <property type="entry name" value="Two-component sensor protein CpxA, periplasmic domain"/>
    <property type="match status" value="1"/>
</dbReference>
<dbReference type="InterPro" id="IPR050398">
    <property type="entry name" value="Bact_Sensor_His_Kinase"/>
</dbReference>
<dbReference type="InterPro" id="IPR032404">
    <property type="entry name" value="CpxA_peri"/>
</dbReference>
<dbReference type="InterPro" id="IPR038515">
    <property type="entry name" value="CpxA_peri_sf"/>
</dbReference>
<dbReference type="InterPro" id="IPR003660">
    <property type="entry name" value="HAMP_dom"/>
</dbReference>
<dbReference type="InterPro" id="IPR036890">
    <property type="entry name" value="HATPase_C_sf"/>
</dbReference>
<dbReference type="InterPro" id="IPR005467">
    <property type="entry name" value="His_kinase_dom"/>
</dbReference>
<dbReference type="InterPro" id="IPR003661">
    <property type="entry name" value="HisK_dim/P_dom"/>
</dbReference>
<dbReference type="InterPro" id="IPR036097">
    <property type="entry name" value="HisK_dim/P_sf"/>
</dbReference>
<dbReference type="InterPro" id="IPR004358">
    <property type="entry name" value="Sig_transdc_His_kin-like_C"/>
</dbReference>
<dbReference type="NCBIfam" id="NF007007">
    <property type="entry name" value="PRK09470.1"/>
    <property type="match status" value="1"/>
</dbReference>
<dbReference type="PANTHER" id="PTHR45528">
    <property type="entry name" value="SENSOR HISTIDINE KINASE CPXA"/>
    <property type="match status" value="1"/>
</dbReference>
<dbReference type="PANTHER" id="PTHR45528:SF1">
    <property type="entry name" value="SENSOR HISTIDINE KINASE CPXA"/>
    <property type="match status" value="1"/>
</dbReference>
<dbReference type="Pfam" id="PF16527">
    <property type="entry name" value="CpxA_peri"/>
    <property type="match status" value="1"/>
</dbReference>
<dbReference type="Pfam" id="PF00672">
    <property type="entry name" value="HAMP"/>
    <property type="match status" value="1"/>
</dbReference>
<dbReference type="Pfam" id="PF02518">
    <property type="entry name" value="HATPase_c"/>
    <property type="match status" value="1"/>
</dbReference>
<dbReference type="Pfam" id="PF00512">
    <property type="entry name" value="HisKA"/>
    <property type="match status" value="1"/>
</dbReference>
<dbReference type="PRINTS" id="PR00344">
    <property type="entry name" value="BCTRLSENSOR"/>
</dbReference>
<dbReference type="SMART" id="SM00304">
    <property type="entry name" value="HAMP"/>
    <property type="match status" value="1"/>
</dbReference>
<dbReference type="SMART" id="SM00387">
    <property type="entry name" value="HATPase_c"/>
    <property type="match status" value="1"/>
</dbReference>
<dbReference type="SMART" id="SM00388">
    <property type="entry name" value="HisKA"/>
    <property type="match status" value="1"/>
</dbReference>
<dbReference type="SUPFAM" id="SSF55874">
    <property type="entry name" value="ATPase domain of HSP90 chaperone/DNA topoisomerase II/histidine kinase"/>
    <property type="match status" value="1"/>
</dbReference>
<dbReference type="SUPFAM" id="SSF47384">
    <property type="entry name" value="Homodimeric domain of signal transducing histidine kinase"/>
    <property type="match status" value="1"/>
</dbReference>
<dbReference type="PROSITE" id="PS50885">
    <property type="entry name" value="HAMP"/>
    <property type="match status" value="1"/>
</dbReference>
<dbReference type="PROSITE" id="PS50109">
    <property type="entry name" value="HIS_KIN"/>
    <property type="match status" value="1"/>
</dbReference>
<gene>
    <name type="primary">cpxA</name>
    <name type="ordered locus">Z5456</name>
    <name type="ordered locus">ECs4837</name>
</gene>
<feature type="chain" id="PRO_0000074740" description="Sensor protein CpxA">
    <location>
        <begin position="1"/>
        <end position="457"/>
    </location>
</feature>
<feature type="topological domain" description="Cytoplasmic" evidence="4">
    <location>
        <begin position="1"/>
        <end position="7"/>
    </location>
</feature>
<feature type="transmembrane region" description="Helical" evidence="4">
    <location>
        <begin position="8"/>
        <end position="29"/>
    </location>
</feature>
<feature type="topological domain" description="Periplasmic" evidence="4">
    <location>
        <begin position="30"/>
        <end position="163"/>
    </location>
</feature>
<feature type="transmembrane region" description="Helical" evidence="4">
    <location>
        <begin position="164"/>
        <end position="184"/>
    </location>
</feature>
<feature type="topological domain" description="Cytoplasmic" evidence="4">
    <location>
        <begin position="185"/>
        <end position="457"/>
    </location>
</feature>
<feature type="domain" description="HAMP" evidence="2">
    <location>
        <begin position="185"/>
        <end position="237"/>
    </location>
</feature>
<feature type="domain" description="Histidine kinase" evidence="3">
    <location>
        <begin position="245"/>
        <end position="455"/>
    </location>
</feature>
<feature type="modified residue" description="Phosphohistidine; by autocatalysis" evidence="3">
    <location>
        <position position="248"/>
    </location>
</feature>
<feature type="sequence conflict" description="In Ref. 1; AAG59105." evidence="4" ref="1">
    <original>T</original>
    <variation>S</variation>
    <location>
        <position position="237"/>
    </location>
</feature>